<sequence length="498" mass="53621">MRINPTTSGPGVSALEEKNLGRIAQIIGPVLDVAFPPGKMPNIYNALVVKGRDTVGQQINVTCEVQQLLGNNRVRAVAMSATDGLTRGMEVIDTGAPLSVPVGGATLGRIFNVLGEPVDNLGPVDTRTTSPIHRSAPAFIQLDTKLSIFETGIKVVDLLAPYRRGGKIGLFGGAGVGKTVLIMELINNIAKAHGGVSVFGGVGERTREGNDLYMEMKESGVINEQNIAESKVALVYGQMNEPPGARMRVGLTALTMAEYFRDVNEQDVLLFIDNIFRFVQAGSEVSALLGRMPSAVGYQPTLSTEMGSLQERITSTKEGSITSIQAVYVPADDLTDPAPATTFAHLDATTVLSRGLAAKGIYPAVDPLDSTSTMLQPRIVGEEHYETAQRVKQTLQRYKELQDIIAILGLDELSEEDRLTVARARKIERFLSQPFFVAEVFTGSPGKYVGLAETIRGFQLILSGELDGLPEQAFYLVGNIDEATAKAMNLEVESKLKK</sequence>
<comment type="function">
    <text evidence="1">Produces ATP from ADP in the presence of a proton gradient across the membrane. The catalytic sites are hosted primarily by the beta subunits.</text>
</comment>
<comment type="catalytic activity">
    <reaction evidence="1">
        <text>ATP + H2O + 4 H(+)(in) = ADP + phosphate + 5 H(+)(out)</text>
        <dbReference type="Rhea" id="RHEA:57720"/>
        <dbReference type="ChEBI" id="CHEBI:15377"/>
        <dbReference type="ChEBI" id="CHEBI:15378"/>
        <dbReference type="ChEBI" id="CHEBI:30616"/>
        <dbReference type="ChEBI" id="CHEBI:43474"/>
        <dbReference type="ChEBI" id="CHEBI:456216"/>
        <dbReference type="EC" id="7.1.2.2"/>
    </reaction>
</comment>
<comment type="subunit">
    <text evidence="1">F-type ATPases have 2 components, CF(1) - the catalytic core - and CF(0) - the membrane proton channel. CF(1) has five subunits: alpha(3), beta(3), gamma(1), delta(1), epsilon(1). CF(0) has four main subunits: a(1), b(1), b'(1) and c(9-12).</text>
</comment>
<comment type="subcellular location">
    <subcellularLocation>
        <location evidence="1">Plastid</location>
        <location evidence="1">Chloroplast thylakoid membrane</location>
        <topology evidence="1">Peripheral membrane protein</topology>
    </subcellularLocation>
</comment>
<comment type="similarity">
    <text evidence="1">Belongs to the ATPase alpha/beta chains family.</text>
</comment>
<protein>
    <recommendedName>
        <fullName evidence="1">ATP synthase subunit beta, chloroplastic</fullName>
        <ecNumber evidence="1">7.1.2.2</ecNumber>
    </recommendedName>
    <alternativeName>
        <fullName evidence="1">ATP synthase F1 sector subunit beta</fullName>
    </alternativeName>
    <alternativeName>
        <fullName evidence="1">F-ATPase subunit beta</fullName>
    </alternativeName>
</protein>
<geneLocation type="chloroplast"/>
<proteinExistence type="inferred from homology"/>
<name>ATPB_PLAOC</name>
<evidence type="ECO:0000255" key="1">
    <source>
        <dbReference type="HAMAP-Rule" id="MF_01347"/>
    </source>
</evidence>
<feature type="chain" id="PRO_0000339637" description="ATP synthase subunit beta, chloroplastic">
    <location>
        <begin position="1"/>
        <end position="498"/>
    </location>
</feature>
<feature type="binding site" evidence="1">
    <location>
        <begin position="172"/>
        <end position="179"/>
    </location>
    <ligand>
        <name>ATP</name>
        <dbReference type="ChEBI" id="CHEBI:30616"/>
    </ligand>
</feature>
<accession>Q09G39</accession>
<dbReference type="EC" id="7.1.2.2" evidence="1"/>
<dbReference type="EMBL" id="DQ923116">
    <property type="protein sequence ID" value="ABI49785.1"/>
    <property type="molecule type" value="Genomic_DNA"/>
</dbReference>
<dbReference type="RefSeq" id="YP_740572.1">
    <property type="nucleotide sequence ID" value="NC_008335.1"/>
</dbReference>
<dbReference type="SMR" id="Q09G39"/>
<dbReference type="GeneID" id="4271297"/>
<dbReference type="GO" id="GO:0009535">
    <property type="term" value="C:chloroplast thylakoid membrane"/>
    <property type="evidence" value="ECO:0007669"/>
    <property type="project" value="UniProtKB-SubCell"/>
</dbReference>
<dbReference type="GO" id="GO:0005739">
    <property type="term" value="C:mitochondrion"/>
    <property type="evidence" value="ECO:0007669"/>
    <property type="project" value="GOC"/>
</dbReference>
<dbReference type="GO" id="GO:0045259">
    <property type="term" value="C:proton-transporting ATP synthase complex"/>
    <property type="evidence" value="ECO:0007669"/>
    <property type="project" value="UniProtKB-KW"/>
</dbReference>
<dbReference type="GO" id="GO:0005524">
    <property type="term" value="F:ATP binding"/>
    <property type="evidence" value="ECO:0007669"/>
    <property type="project" value="UniProtKB-UniRule"/>
</dbReference>
<dbReference type="GO" id="GO:0016887">
    <property type="term" value="F:ATP hydrolysis activity"/>
    <property type="evidence" value="ECO:0007669"/>
    <property type="project" value="InterPro"/>
</dbReference>
<dbReference type="GO" id="GO:0046933">
    <property type="term" value="F:proton-transporting ATP synthase activity, rotational mechanism"/>
    <property type="evidence" value="ECO:0007669"/>
    <property type="project" value="UniProtKB-UniRule"/>
</dbReference>
<dbReference type="GO" id="GO:0042776">
    <property type="term" value="P:proton motive force-driven mitochondrial ATP synthesis"/>
    <property type="evidence" value="ECO:0007669"/>
    <property type="project" value="TreeGrafter"/>
</dbReference>
<dbReference type="CDD" id="cd18110">
    <property type="entry name" value="ATP-synt_F1_beta_C"/>
    <property type="match status" value="1"/>
</dbReference>
<dbReference type="CDD" id="cd18115">
    <property type="entry name" value="ATP-synt_F1_beta_N"/>
    <property type="match status" value="1"/>
</dbReference>
<dbReference type="CDD" id="cd01133">
    <property type="entry name" value="F1-ATPase_beta_CD"/>
    <property type="match status" value="1"/>
</dbReference>
<dbReference type="FunFam" id="1.10.1140.10:FF:000001">
    <property type="entry name" value="ATP synthase subunit beta"/>
    <property type="match status" value="1"/>
</dbReference>
<dbReference type="FunFam" id="3.40.50.300:FF:000004">
    <property type="entry name" value="ATP synthase subunit beta"/>
    <property type="match status" value="1"/>
</dbReference>
<dbReference type="FunFam" id="2.40.10.170:FF:000002">
    <property type="entry name" value="ATP synthase subunit beta, chloroplastic"/>
    <property type="match status" value="1"/>
</dbReference>
<dbReference type="Gene3D" id="2.40.10.170">
    <property type="match status" value="1"/>
</dbReference>
<dbReference type="Gene3D" id="1.10.1140.10">
    <property type="entry name" value="Bovine Mitochondrial F1-atpase, Atp Synthase Beta Chain, Chain D, domain 3"/>
    <property type="match status" value="1"/>
</dbReference>
<dbReference type="Gene3D" id="3.40.50.300">
    <property type="entry name" value="P-loop containing nucleotide triphosphate hydrolases"/>
    <property type="match status" value="1"/>
</dbReference>
<dbReference type="HAMAP" id="MF_01347">
    <property type="entry name" value="ATP_synth_beta_bact"/>
    <property type="match status" value="1"/>
</dbReference>
<dbReference type="InterPro" id="IPR003593">
    <property type="entry name" value="AAA+_ATPase"/>
</dbReference>
<dbReference type="InterPro" id="IPR055190">
    <property type="entry name" value="ATP-synt_VA_C"/>
</dbReference>
<dbReference type="InterPro" id="IPR005722">
    <property type="entry name" value="ATP_synth_F1_bsu"/>
</dbReference>
<dbReference type="InterPro" id="IPR020003">
    <property type="entry name" value="ATPase_a/bsu_AS"/>
</dbReference>
<dbReference type="InterPro" id="IPR050053">
    <property type="entry name" value="ATPase_alpha/beta_chains"/>
</dbReference>
<dbReference type="InterPro" id="IPR004100">
    <property type="entry name" value="ATPase_F1/V1/A1_a/bsu_N"/>
</dbReference>
<dbReference type="InterPro" id="IPR036121">
    <property type="entry name" value="ATPase_F1/V1/A1_a/bsu_N_sf"/>
</dbReference>
<dbReference type="InterPro" id="IPR000194">
    <property type="entry name" value="ATPase_F1/V1/A1_a/bsu_nucl-bd"/>
</dbReference>
<dbReference type="InterPro" id="IPR024034">
    <property type="entry name" value="ATPase_F1/V1_b/a_C"/>
</dbReference>
<dbReference type="InterPro" id="IPR027417">
    <property type="entry name" value="P-loop_NTPase"/>
</dbReference>
<dbReference type="NCBIfam" id="TIGR01039">
    <property type="entry name" value="atpD"/>
    <property type="match status" value="1"/>
</dbReference>
<dbReference type="PANTHER" id="PTHR15184">
    <property type="entry name" value="ATP SYNTHASE"/>
    <property type="match status" value="1"/>
</dbReference>
<dbReference type="PANTHER" id="PTHR15184:SF71">
    <property type="entry name" value="ATP SYNTHASE SUBUNIT BETA, MITOCHONDRIAL"/>
    <property type="match status" value="1"/>
</dbReference>
<dbReference type="Pfam" id="PF00006">
    <property type="entry name" value="ATP-synt_ab"/>
    <property type="match status" value="1"/>
</dbReference>
<dbReference type="Pfam" id="PF02874">
    <property type="entry name" value="ATP-synt_ab_N"/>
    <property type="match status" value="1"/>
</dbReference>
<dbReference type="Pfam" id="PF22919">
    <property type="entry name" value="ATP-synt_VA_C"/>
    <property type="match status" value="1"/>
</dbReference>
<dbReference type="SMART" id="SM00382">
    <property type="entry name" value="AAA"/>
    <property type="match status" value="1"/>
</dbReference>
<dbReference type="SUPFAM" id="SSF47917">
    <property type="entry name" value="C-terminal domain of alpha and beta subunits of F1 ATP synthase"/>
    <property type="match status" value="1"/>
</dbReference>
<dbReference type="SUPFAM" id="SSF50615">
    <property type="entry name" value="N-terminal domain of alpha and beta subunits of F1 ATP synthase"/>
    <property type="match status" value="1"/>
</dbReference>
<dbReference type="SUPFAM" id="SSF52540">
    <property type="entry name" value="P-loop containing nucleoside triphosphate hydrolases"/>
    <property type="match status" value="1"/>
</dbReference>
<dbReference type="PROSITE" id="PS00152">
    <property type="entry name" value="ATPASE_ALPHA_BETA"/>
    <property type="match status" value="1"/>
</dbReference>
<reference key="1">
    <citation type="journal article" date="2006" name="BMC Plant Biol.">
        <title>Rapid and accurate pyrosequencing of angiosperm plastid genomes.</title>
        <authorList>
            <person name="Moore M.J."/>
            <person name="Dhingra A."/>
            <person name="Soltis P.S."/>
            <person name="Shaw R."/>
            <person name="Farmerie W.G."/>
            <person name="Folta K.M."/>
            <person name="Soltis D.E."/>
        </authorList>
    </citation>
    <scope>NUCLEOTIDE SEQUENCE [LARGE SCALE GENOMIC DNA]</scope>
</reference>
<keyword id="KW-0066">ATP synthesis</keyword>
<keyword id="KW-0067">ATP-binding</keyword>
<keyword id="KW-0139">CF(1)</keyword>
<keyword id="KW-0150">Chloroplast</keyword>
<keyword id="KW-0375">Hydrogen ion transport</keyword>
<keyword id="KW-0406">Ion transport</keyword>
<keyword id="KW-0472">Membrane</keyword>
<keyword id="KW-0547">Nucleotide-binding</keyword>
<keyword id="KW-0934">Plastid</keyword>
<keyword id="KW-0793">Thylakoid</keyword>
<keyword id="KW-1278">Translocase</keyword>
<keyword id="KW-0813">Transport</keyword>
<organism>
    <name type="scientific">Platanus occidentalis</name>
    <name type="common">Sycamore</name>
    <name type="synonym">American plane tree</name>
    <dbReference type="NCBI Taxonomy" id="4403"/>
    <lineage>
        <taxon>Eukaryota</taxon>
        <taxon>Viridiplantae</taxon>
        <taxon>Streptophyta</taxon>
        <taxon>Embryophyta</taxon>
        <taxon>Tracheophyta</taxon>
        <taxon>Spermatophyta</taxon>
        <taxon>Magnoliopsida</taxon>
        <taxon>Proteales</taxon>
        <taxon>Platanaceae</taxon>
        <taxon>Platanus</taxon>
    </lineage>
</organism>
<gene>
    <name evidence="1" type="primary">atpB</name>
</gene>